<accession>Q9PJU6</accession>
<gene>
    <name type="ordered locus">TC_0731</name>
</gene>
<protein>
    <recommendedName>
        <fullName>Uncharacterized protein TC_0731</fullName>
    </recommendedName>
    <alternativeName>
        <fullName>EUO</fullName>
    </alternativeName>
</protein>
<feature type="chain" id="PRO_0000218394" description="Uncharacterized protein TC_0731">
    <location>
        <begin position="1"/>
        <end position="185"/>
    </location>
</feature>
<evidence type="ECO:0000305" key="1"/>
<reference key="1">
    <citation type="journal article" date="2000" name="Nucleic Acids Res.">
        <title>Genome sequences of Chlamydia trachomatis MoPn and Chlamydia pneumoniae AR39.</title>
        <authorList>
            <person name="Read T.D."/>
            <person name="Brunham R.C."/>
            <person name="Shen C."/>
            <person name="Gill S.R."/>
            <person name="Heidelberg J.F."/>
            <person name="White O."/>
            <person name="Hickey E.K."/>
            <person name="Peterson J.D."/>
            <person name="Utterback T.R."/>
            <person name="Berry K.J."/>
            <person name="Bass S."/>
            <person name="Linher K.D."/>
            <person name="Weidman J.F."/>
            <person name="Khouri H.M."/>
            <person name="Craven B."/>
            <person name="Bowman C."/>
            <person name="Dodson R.J."/>
            <person name="Gwinn M.L."/>
            <person name="Nelson W.C."/>
            <person name="DeBoy R.T."/>
            <person name="Kolonay J.F."/>
            <person name="McClarty G."/>
            <person name="Salzberg S.L."/>
            <person name="Eisen J.A."/>
            <person name="Fraser C.M."/>
        </authorList>
    </citation>
    <scope>NUCLEOTIDE SEQUENCE [LARGE SCALE GENOMIC DNA]</scope>
    <source>
        <strain>MoPn / Nigg</strain>
    </source>
</reference>
<name>Y731_CHLMU</name>
<dbReference type="EMBL" id="AE002160">
    <property type="protein sequence ID" value="AAF39541.1"/>
    <property type="molecule type" value="Genomic_DNA"/>
</dbReference>
<dbReference type="PIR" id="G81671">
    <property type="entry name" value="G81671"/>
</dbReference>
<dbReference type="RefSeq" id="WP_010231366.1">
    <property type="nucleotide sequence ID" value="NZ_CP063055.1"/>
</dbReference>
<dbReference type="GeneID" id="1246094"/>
<dbReference type="KEGG" id="cmu:TC_0731"/>
<dbReference type="eggNOG" id="ENOG5030EXK">
    <property type="taxonomic scope" value="Bacteria"/>
</dbReference>
<dbReference type="HOGENOM" id="CLU_138391_0_0_0"/>
<dbReference type="OrthoDB" id="17929at2"/>
<dbReference type="Proteomes" id="UP000000800">
    <property type="component" value="Chromosome"/>
</dbReference>
<dbReference type="InterPro" id="IPR041657">
    <property type="entry name" value="HTH_17"/>
</dbReference>
<dbReference type="Pfam" id="PF12728">
    <property type="entry name" value="HTH_17"/>
    <property type="match status" value="1"/>
</dbReference>
<sequence length="185" mass="21282">MECLQQDTWAEVEQVQEEQQEEENAVSANAQRVSITQAAKLHNVTRQAIYVAIKQKKLKASKTTRWEIDLQDLEDYRRNRYSRAKSTYQGELLFDNEKGFYSVGQVASMLNVPEQKIYYATRIGAMKGERRGSAWVIHVSEVDRYRNDYLKKEAERKGKNLSAMREGFGTLGASELLADSEDFVS</sequence>
<proteinExistence type="inferred from homology"/>
<organism>
    <name type="scientific">Chlamydia muridarum (strain MoPn / Nigg)</name>
    <dbReference type="NCBI Taxonomy" id="243161"/>
    <lineage>
        <taxon>Bacteria</taxon>
        <taxon>Pseudomonadati</taxon>
        <taxon>Chlamydiota</taxon>
        <taxon>Chlamydiia</taxon>
        <taxon>Chlamydiales</taxon>
        <taxon>Chlamydiaceae</taxon>
        <taxon>Chlamydia/Chlamydophila group</taxon>
        <taxon>Chlamydia</taxon>
    </lineage>
</organism>
<comment type="similarity">
    <text evidence="1">Belongs to the EUO family.</text>
</comment>